<keyword id="KW-0963">Cytoplasm</keyword>
<keyword id="KW-0378">Hydrolase</keyword>
<keyword id="KW-0540">Nuclease</keyword>
<keyword id="KW-0690">Ribosome biogenesis</keyword>
<gene>
    <name type="ordered locus">CF0406</name>
</gene>
<protein>
    <recommendedName>
        <fullName evidence="1">Putative pre-16S rRNA nuclease</fullName>
        <ecNumber evidence="1">3.1.-.-</ecNumber>
    </recommendedName>
</protein>
<organism>
    <name type="scientific">Chlamydia felis (strain Fe/C-56)</name>
    <name type="common">Chlamydophila felis</name>
    <dbReference type="NCBI Taxonomy" id="264202"/>
    <lineage>
        <taxon>Bacteria</taxon>
        <taxon>Pseudomonadati</taxon>
        <taxon>Chlamydiota</taxon>
        <taxon>Chlamydiia</taxon>
        <taxon>Chlamydiales</taxon>
        <taxon>Chlamydiaceae</taxon>
        <taxon>Chlamydia/Chlamydophila group</taxon>
        <taxon>Chlamydia</taxon>
    </lineage>
</organism>
<sequence>MSKPKAKKIFLGVDYGQRRIGLAYAASPLFISLPIGFIEAGKTLEATAQSLAKIILEREVSCVVLGNPIPMQIGQKSSLQEEILKISSLIQEFCHVDVVLWDERLSSAQAERMLKCDCGLSRKQRKGKTDSVAATLILTNFLESSPSIRF</sequence>
<comment type="function">
    <text evidence="1">Could be a nuclease involved in processing of the 5'-end of pre-16S rRNA.</text>
</comment>
<comment type="subcellular location">
    <subcellularLocation>
        <location evidence="1">Cytoplasm</location>
    </subcellularLocation>
</comment>
<comment type="similarity">
    <text evidence="1">Belongs to the YqgF nuclease family.</text>
</comment>
<evidence type="ECO:0000255" key="1">
    <source>
        <dbReference type="HAMAP-Rule" id="MF_00651"/>
    </source>
</evidence>
<proteinExistence type="inferred from homology"/>
<accession>Q254W0</accession>
<feature type="chain" id="PRO_0000257517" description="Putative pre-16S rRNA nuclease">
    <location>
        <begin position="1"/>
        <end position="150"/>
    </location>
</feature>
<name>YQGF_CHLFF</name>
<dbReference type="EC" id="3.1.-.-" evidence="1"/>
<dbReference type="EMBL" id="AP006861">
    <property type="protein sequence ID" value="BAE81178.1"/>
    <property type="molecule type" value="Genomic_DNA"/>
</dbReference>
<dbReference type="RefSeq" id="WP_011457958.1">
    <property type="nucleotide sequence ID" value="NC_007899.1"/>
</dbReference>
<dbReference type="SMR" id="Q254W0"/>
<dbReference type="STRING" id="264202.gene:10544225"/>
<dbReference type="KEGG" id="cfe:BAE81178.1"/>
<dbReference type="eggNOG" id="COG0816">
    <property type="taxonomic scope" value="Bacteria"/>
</dbReference>
<dbReference type="HOGENOM" id="CLU_098240_2_0_0"/>
<dbReference type="OrthoDB" id="9796140at2"/>
<dbReference type="Proteomes" id="UP000001260">
    <property type="component" value="Chromosome"/>
</dbReference>
<dbReference type="GO" id="GO:0005829">
    <property type="term" value="C:cytosol"/>
    <property type="evidence" value="ECO:0007669"/>
    <property type="project" value="TreeGrafter"/>
</dbReference>
<dbReference type="GO" id="GO:0004518">
    <property type="term" value="F:nuclease activity"/>
    <property type="evidence" value="ECO:0007669"/>
    <property type="project" value="UniProtKB-KW"/>
</dbReference>
<dbReference type="GO" id="GO:0000967">
    <property type="term" value="P:rRNA 5'-end processing"/>
    <property type="evidence" value="ECO:0007669"/>
    <property type="project" value="UniProtKB-UniRule"/>
</dbReference>
<dbReference type="CDD" id="cd16964">
    <property type="entry name" value="YqgF"/>
    <property type="match status" value="1"/>
</dbReference>
<dbReference type="Gene3D" id="3.30.420.140">
    <property type="entry name" value="YqgF/RNase H-like domain"/>
    <property type="match status" value="1"/>
</dbReference>
<dbReference type="HAMAP" id="MF_00651">
    <property type="entry name" value="Nuclease_YqgF"/>
    <property type="match status" value="1"/>
</dbReference>
<dbReference type="InterPro" id="IPR012337">
    <property type="entry name" value="RNaseH-like_sf"/>
</dbReference>
<dbReference type="InterPro" id="IPR005227">
    <property type="entry name" value="YqgF"/>
</dbReference>
<dbReference type="InterPro" id="IPR006641">
    <property type="entry name" value="YqgF/RNaseH-like_dom"/>
</dbReference>
<dbReference type="InterPro" id="IPR037027">
    <property type="entry name" value="YqgF/RNaseH-like_dom_sf"/>
</dbReference>
<dbReference type="NCBIfam" id="TIGR00250">
    <property type="entry name" value="RNAse_H_YqgF"/>
    <property type="match status" value="1"/>
</dbReference>
<dbReference type="PANTHER" id="PTHR33317">
    <property type="entry name" value="POLYNUCLEOTIDYL TRANSFERASE, RIBONUCLEASE H-LIKE SUPERFAMILY PROTEIN"/>
    <property type="match status" value="1"/>
</dbReference>
<dbReference type="PANTHER" id="PTHR33317:SF4">
    <property type="entry name" value="POLYNUCLEOTIDYL TRANSFERASE, RIBONUCLEASE H-LIKE SUPERFAMILY PROTEIN"/>
    <property type="match status" value="1"/>
</dbReference>
<dbReference type="Pfam" id="PF03652">
    <property type="entry name" value="RuvX"/>
    <property type="match status" value="1"/>
</dbReference>
<dbReference type="SMART" id="SM00732">
    <property type="entry name" value="YqgFc"/>
    <property type="match status" value="1"/>
</dbReference>
<dbReference type="SUPFAM" id="SSF53098">
    <property type="entry name" value="Ribonuclease H-like"/>
    <property type="match status" value="1"/>
</dbReference>
<reference key="1">
    <citation type="journal article" date="2006" name="DNA Res.">
        <title>Genome sequence of the cat pathogen, Chlamydophila felis.</title>
        <authorList>
            <person name="Azuma Y."/>
            <person name="Hirakawa H."/>
            <person name="Yamashita A."/>
            <person name="Cai Y."/>
            <person name="Rahman M.A."/>
            <person name="Suzuki H."/>
            <person name="Mitaku S."/>
            <person name="Toh H."/>
            <person name="Goto S."/>
            <person name="Murakami T."/>
            <person name="Sugi K."/>
            <person name="Hayashi H."/>
            <person name="Fukushi H."/>
            <person name="Hattori M."/>
            <person name="Kuhara S."/>
            <person name="Shirai M."/>
        </authorList>
    </citation>
    <scope>NUCLEOTIDE SEQUENCE [LARGE SCALE GENOMIC DNA]</scope>
    <source>
        <strain>Fe/C-56</strain>
    </source>
</reference>